<proteinExistence type="evidence at transcript level"/>
<comment type="subcellular location">
    <subcellularLocation>
        <location evidence="1">Secreted</location>
    </subcellularLocation>
</comment>
<comment type="tissue specificity">
    <text>Expressed by the venom duct.</text>
</comment>
<comment type="domain">
    <text evidence="1">The presence of a 'disulfide through disulfide knot' structurally defines this protein as a knottin.</text>
</comment>
<comment type="domain">
    <text>The cysteine framework is VI/VII (C-C-CC-C-C).</text>
</comment>
<comment type="miscellaneous">
    <text>This precursor corresponds to allele E1e. Has not been merged with other alleles since they may differ due to geographic variation (see strain in PubMed:19606224).</text>
</comment>
<comment type="similarity">
    <text evidence="3">Belongs to the conotoxin O1 superfamily.</text>
</comment>
<feature type="signal peptide" evidence="2">
    <location>
        <begin position="1" status="less than"/>
        <end position="17"/>
    </location>
</feature>
<feature type="propeptide" id="PRO_0000414648" evidence="1">
    <location>
        <begin position="18"/>
        <end position="41"/>
    </location>
</feature>
<feature type="peptide" id="PRO_0000414649" description="Conotoxin Eb6.21">
    <location>
        <begin position="42"/>
        <end position="69"/>
    </location>
</feature>
<feature type="disulfide bond" evidence="1">
    <location>
        <begin position="43"/>
        <end position="57"/>
    </location>
</feature>
<feature type="disulfide bond" evidence="1">
    <location>
        <begin position="50"/>
        <end position="61"/>
    </location>
</feature>
<feature type="disulfide bond" evidence="1">
    <location>
        <begin position="56"/>
        <end position="68"/>
    </location>
</feature>
<feature type="non-terminal residue">
    <location>
        <position position="1"/>
    </location>
</feature>
<keyword id="KW-1015">Disulfide bond</keyword>
<keyword id="KW-0960">Knottin</keyword>
<keyword id="KW-0964">Secreted</keyword>
<keyword id="KW-0732">Signal</keyword>
<keyword id="KW-0800">Toxin</keyword>
<name>O16L_CONEA</name>
<dbReference type="EMBL" id="FJ804534">
    <property type="protein sequence ID" value="ACU56809.1"/>
    <property type="molecule type" value="mRNA"/>
</dbReference>
<dbReference type="SMR" id="C7T186"/>
<dbReference type="ConoServer" id="3843">
    <property type="toxin name" value="Eb6.21 precursor"/>
</dbReference>
<dbReference type="GO" id="GO:0005576">
    <property type="term" value="C:extracellular region"/>
    <property type="evidence" value="ECO:0007669"/>
    <property type="project" value="UniProtKB-SubCell"/>
</dbReference>
<dbReference type="GO" id="GO:0008200">
    <property type="term" value="F:ion channel inhibitor activity"/>
    <property type="evidence" value="ECO:0007669"/>
    <property type="project" value="InterPro"/>
</dbReference>
<dbReference type="GO" id="GO:0090729">
    <property type="term" value="F:toxin activity"/>
    <property type="evidence" value="ECO:0007669"/>
    <property type="project" value="UniProtKB-KW"/>
</dbReference>
<dbReference type="InterPro" id="IPR004214">
    <property type="entry name" value="Conotoxin"/>
</dbReference>
<dbReference type="Pfam" id="PF02950">
    <property type="entry name" value="Conotoxin"/>
    <property type="match status" value="1"/>
</dbReference>
<gene>
    <name type="primary">E1</name>
</gene>
<organism>
    <name type="scientific">Conus ebraeus</name>
    <name type="common">Hebrew cone</name>
    <dbReference type="NCBI Taxonomy" id="89425"/>
    <lineage>
        <taxon>Eukaryota</taxon>
        <taxon>Metazoa</taxon>
        <taxon>Spiralia</taxon>
        <taxon>Lophotrochozoa</taxon>
        <taxon>Mollusca</taxon>
        <taxon>Gastropoda</taxon>
        <taxon>Caenogastropoda</taxon>
        <taxon>Neogastropoda</taxon>
        <taxon>Conoidea</taxon>
        <taxon>Conidae</taxon>
        <taxon>Conus</taxon>
        <taxon>Virroconus</taxon>
    </lineage>
</organism>
<evidence type="ECO:0000250" key="1"/>
<evidence type="ECO:0000255" key="2"/>
<evidence type="ECO:0000305" key="3"/>
<sequence>VLIIAVLFLTACQLTTAETYSRGRQKHRARRSTDKNSKWTRECTRSGGACYSHNQCCDDFCSTATSTCI</sequence>
<reference key="1">
    <citation type="journal article" date="2009" name="PLoS ONE">
        <title>Geographic variation in venom allelic composition and diets of the widespread predatory marine gastropod Conus ebraeus.</title>
        <authorList>
            <person name="Duda T.F. Jr."/>
            <person name="Chang D."/>
            <person name="Lewis B.D."/>
            <person name="Lee T."/>
        </authorList>
    </citation>
    <scope>NUCLEOTIDE SEQUENCE [MRNA]</scope>
    <source>
        <strain>Hawaii</strain>
        <tissue>Venom duct</tissue>
    </source>
</reference>
<accession>C7T186</accession>
<protein>
    <recommendedName>
        <fullName>Conotoxin Eb6.21</fullName>
    </recommendedName>
</protein>